<comment type="function">
    <text evidence="1">Catalyzes the transfer of the gamma-phosphate of ATP to D-galactose to form alpha-D-galactose-1-phosphate (Gal-1-P).</text>
</comment>
<comment type="catalytic activity">
    <reaction evidence="1">
        <text>alpha-D-galactose + ATP = alpha-D-galactose 1-phosphate + ADP + H(+)</text>
        <dbReference type="Rhea" id="RHEA:13553"/>
        <dbReference type="ChEBI" id="CHEBI:15378"/>
        <dbReference type="ChEBI" id="CHEBI:28061"/>
        <dbReference type="ChEBI" id="CHEBI:30616"/>
        <dbReference type="ChEBI" id="CHEBI:58336"/>
        <dbReference type="ChEBI" id="CHEBI:456216"/>
        <dbReference type="EC" id="2.7.1.6"/>
    </reaction>
</comment>
<comment type="pathway">
    <text evidence="1">Carbohydrate metabolism; galactose metabolism.</text>
</comment>
<comment type="subcellular location">
    <subcellularLocation>
        <location evidence="1">Cytoplasm</location>
    </subcellularLocation>
</comment>
<comment type="similarity">
    <text evidence="1">Belongs to the GHMP kinase family. GalK subfamily.</text>
</comment>
<evidence type="ECO:0000255" key="1">
    <source>
        <dbReference type="HAMAP-Rule" id="MF_00246"/>
    </source>
</evidence>
<dbReference type="EC" id="2.7.1.6" evidence="1"/>
<dbReference type="EMBL" id="AM286415">
    <property type="protein sequence ID" value="CAL12958.1"/>
    <property type="molecule type" value="Genomic_DNA"/>
</dbReference>
<dbReference type="RefSeq" id="WP_011816804.1">
    <property type="nucleotide sequence ID" value="NC_008800.1"/>
</dbReference>
<dbReference type="RefSeq" id="YP_001007108.1">
    <property type="nucleotide sequence ID" value="NC_008800.1"/>
</dbReference>
<dbReference type="SMR" id="A1JRX5"/>
<dbReference type="KEGG" id="yen:YE2919"/>
<dbReference type="PATRIC" id="fig|393305.7.peg.3105"/>
<dbReference type="eggNOG" id="COG0153">
    <property type="taxonomic scope" value="Bacteria"/>
</dbReference>
<dbReference type="HOGENOM" id="CLU_017814_2_1_6"/>
<dbReference type="OrthoDB" id="250531at2"/>
<dbReference type="UniPathway" id="UPA00214"/>
<dbReference type="Proteomes" id="UP000000642">
    <property type="component" value="Chromosome"/>
</dbReference>
<dbReference type="GO" id="GO:0005829">
    <property type="term" value="C:cytosol"/>
    <property type="evidence" value="ECO:0007669"/>
    <property type="project" value="TreeGrafter"/>
</dbReference>
<dbReference type="GO" id="GO:0005524">
    <property type="term" value="F:ATP binding"/>
    <property type="evidence" value="ECO:0007669"/>
    <property type="project" value="UniProtKB-UniRule"/>
</dbReference>
<dbReference type="GO" id="GO:0004335">
    <property type="term" value="F:galactokinase activity"/>
    <property type="evidence" value="ECO:0007669"/>
    <property type="project" value="UniProtKB-UniRule"/>
</dbReference>
<dbReference type="GO" id="GO:0000287">
    <property type="term" value="F:magnesium ion binding"/>
    <property type="evidence" value="ECO:0007669"/>
    <property type="project" value="UniProtKB-UniRule"/>
</dbReference>
<dbReference type="GO" id="GO:0006012">
    <property type="term" value="P:galactose metabolic process"/>
    <property type="evidence" value="ECO:0007669"/>
    <property type="project" value="UniProtKB-UniRule"/>
</dbReference>
<dbReference type="FunFam" id="3.30.230.10:FF:000017">
    <property type="entry name" value="Galactokinase"/>
    <property type="match status" value="1"/>
</dbReference>
<dbReference type="FunFam" id="3.30.70.890:FF:000001">
    <property type="entry name" value="Galactokinase"/>
    <property type="match status" value="1"/>
</dbReference>
<dbReference type="Gene3D" id="3.30.230.10">
    <property type="match status" value="1"/>
</dbReference>
<dbReference type="Gene3D" id="3.30.70.890">
    <property type="entry name" value="GHMP kinase, C-terminal domain"/>
    <property type="match status" value="1"/>
</dbReference>
<dbReference type="HAMAP" id="MF_00246">
    <property type="entry name" value="Galactokinase"/>
    <property type="match status" value="1"/>
</dbReference>
<dbReference type="InterPro" id="IPR000705">
    <property type="entry name" value="Galactokinase"/>
</dbReference>
<dbReference type="InterPro" id="IPR022963">
    <property type="entry name" value="Galactokinase_bac"/>
</dbReference>
<dbReference type="InterPro" id="IPR019741">
    <property type="entry name" value="Galactokinase_CS"/>
</dbReference>
<dbReference type="InterPro" id="IPR019539">
    <property type="entry name" value="GalKase_N"/>
</dbReference>
<dbReference type="InterPro" id="IPR013750">
    <property type="entry name" value="GHMP_kinase_C_dom"/>
</dbReference>
<dbReference type="InterPro" id="IPR036554">
    <property type="entry name" value="GHMP_kinase_C_sf"/>
</dbReference>
<dbReference type="InterPro" id="IPR006204">
    <property type="entry name" value="GHMP_kinase_N_dom"/>
</dbReference>
<dbReference type="InterPro" id="IPR006203">
    <property type="entry name" value="GHMP_knse_ATP-bd_CS"/>
</dbReference>
<dbReference type="InterPro" id="IPR006206">
    <property type="entry name" value="Mevalonate/galactokinase"/>
</dbReference>
<dbReference type="InterPro" id="IPR020568">
    <property type="entry name" value="Ribosomal_Su5_D2-typ_SF"/>
</dbReference>
<dbReference type="InterPro" id="IPR014721">
    <property type="entry name" value="Ribsml_uS5_D2-typ_fold_subgr"/>
</dbReference>
<dbReference type="NCBIfam" id="TIGR00131">
    <property type="entry name" value="gal_kin"/>
    <property type="match status" value="1"/>
</dbReference>
<dbReference type="NCBIfam" id="NF003472">
    <property type="entry name" value="PRK05101.1"/>
    <property type="match status" value="1"/>
</dbReference>
<dbReference type="PANTHER" id="PTHR10457:SF7">
    <property type="entry name" value="GALACTOKINASE-RELATED"/>
    <property type="match status" value="1"/>
</dbReference>
<dbReference type="PANTHER" id="PTHR10457">
    <property type="entry name" value="MEVALONATE KINASE/GALACTOKINASE"/>
    <property type="match status" value="1"/>
</dbReference>
<dbReference type="Pfam" id="PF10509">
    <property type="entry name" value="GalKase_gal_bdg"/>
    <property type="match status" value="1"/>
</dbReference>
<dbReference type="Pfam" id="PF08544">
    <property type="entry name" value="GHMP_kinases_C"/>
    <property type="match status" value="1"/>
</dbReference>
<dbReference type="Pfam" id="PF00288">
    <property type="entry name" value="GHMP_kinases_N"/>
    <property type="match status" value="1"/>
</dbReference>
<dbReference type="PIRSF" id="PIRSF000530">
    <property type="entry name" value="Galactokinase"/>
    <property type="match status" value="1"/>
</dbReference>
<dbReference type="PRINTS" id="PR00473">
    <property type="entry name" value="GALCTOKINASE"/>
</dbReference>
<dbReference type="PRINTS" id="PR00959">
    <property type="entry name" value="MEVGALKINASE"/>
</dbReference>
<dbReference type="SUPFAM" id="SSF55060">
    <property type="entry name" value="GHMP Kinase, C-terminal domain"/>
    <property type="match status" value="1"/>
</dbReference>
<dbReference type="SUPFAM" id="SSF54211">
    <property type="entry name" value="Ribosomal protein S5 domain 2-like"/>
    <property type="match status" value="1"/>
</dbReference>
<dbReference type="PROSITE" id="PS00106">
    <property type="entry name" value="GALACTOKINASE"/>
    <property type="match status" value="1"/>
</dbReference>
<dbReference type="PROSITE" id="PS00627">
    <property type="entry name" value="GHMP_KINASES_ATP"/>
    <property type="match status" value="1"/>
</dbReference>
<name>GAL1_YERE8</name>
<gene>
    <name evidence="1" type="primary">galK</name>
    <name type="ordered locus">YE2919</name>
</gene>
<organism>
    <name type="scientific">Yersinia enterocolitica serotype O:8 / biotype 1B (strain NCTC 13174 / 8081)</name>
    <dbReference type="NCBI Taxonomy" id="393305"/>
    <lineage>
        <taxon>Bacteria</taxon>
        <taxon>Pseudomonadati</taxon>
        <taxon>Pseudomonadota</taxon>
        <taxon>Gammaproteobacteria</taxon>
        <taxon>Enterobacterales</taxon>
        <taxon>Yersiniaceae</taxon>
        <taxon>Yersinia</taxon>
    </lineage>
</organism>
<keyword id="KW-0067">ATP-binding</keyword>
<keyword id="KW-0119">Carbohydrate metabolism</keyword>
<keyword id="KW-0963">Cytoplasm</keyword>
<keyword id="KW-0299">Galactose metabolism</keyword>
<keyword id="KW-0418">Kinase</keyword>
<keyword id="KW-0460">Magnesium</keyword>
<keyword id="KW-0479">Metal-binding</keyword>
<keyword id="KW-0547">Nucleotide-binding</keyword>
<keyword id="KW-0808">Transferase</keyword>
<feature type="chain" id="PRO_1000005771" description="Galactokinase">
    <location>
        <begin position="1"/>
        <end position="383"/>
    </location>
</feature>
<feature type="active site" description="Proton acceptor" evidence="1">
    <location>
        <position position="174"/>
    </location>
</feature>
<feature type="binding site" evidence="1">
    <location>
        <begin position="34"/>
        <end position="37"/>
    </location>
    <ligand>
        <name>substrate</name>
    </ligand>
</feature>
<feature type="binding site" evidence="1">
    <location>
        <begin position="124"/>
        <end position="130"/>
    </location>
    <ligand>
        <name>ATP</name>
        <dbReference type="ChEBI" id="CHEBI:30616"/>
    </ligand>
</feature>
<feature type="binding site" evidence="1">
    <location>
        <position position="130"/>
    </location>
    <ligand>
        <name>Mg(2+)</name>
        <dbReference type="ChEBI" id="CHEBI:18420"/>
    </ligand>
</feature>
<feature type="binding site" evidence="1">
    <location>
        <position position="162"/>
    </location>
    <ligand>
        <name>Mg(2+)</name>
        <dbReference type="ChEBI" id="CHEBI:18420"/>
    </ligand>
</feature>
<feature type="binding site" evidence="1">
    <location>
        <position position="223"/>
    </location>
    <ligand>
        <name>substrate</name>
    </ligand>
</feature>
<feature type="site" description="Transition state stabilizer" evidence="1">
    <location>
        <position position="28"/>
    </location>
</feature>
<accession>A1JRX5</accession>
<protein>
    <recommendedName>
        <fullName evidence="1">Galactokinase</fullName>
        <ecNumber evidence="1">2.7.1.6</ecNumber>
    </recommendedName>
    <alternativeName>
        <fullName evidence="1">Galactose kinase</fullName>
    </alternativeName>
</protein>
<proteinExistence type="inferred from homology"/>
<reference key="1">
    <citation type="journal article" date="2006" name="PLoS Genet.">
        <title>The complete genome sequence and comparative genome analysis of the high pathogenicity Yersinia enterocolitica strain 8081.</title>
        <authorList>
            <person name="Thomson N.R."/>
            <person name="Howard S."/>
            <person name="Wren B.W."/>
            <person name="Holden M.T.G."/>
            <person name="Crossman L."/>
            <person name="Challis G.L."/>
            <person name="Churcher C."/>
            <person name="Mungall K."/>
            <person name="Brooks K."/>
            <person name="Chillingworth T."/>
            <person name="Feltwell T."/>
            <person name="Abdellah Z."/>
            <person name="Hauser H."/>
            <person name="Jagels K."/>
            <person name="Maddison M."/>
            <person name="Moule S."/>
            <person name="Sanders M."/>
            <person name="Whitehead S."/>
            <person name="Quail M.A."/>
            <person name="Dougan G."/>
            <person name="Parkhill J."/>
            <person name="Prentice M.B."/>
        </authorList>
    </citation>
    <scope>NUCLEOTIDE SEQUENCE [LARGE SCALE GENOMIC DNA]</scope>
    <source>
        <strain>NCTC 13174 / 8081</strain>
    </source>
</reference>
<sequence>MSLKQHTQAIFRQQFSHEPNITIKAPGRVNLIGEHTDYNDGFVLPCAIDYETVISCSKRDDRQIHVIAADYDNQQDIFSLDEPIVPHAQYRWADYVRGVVKHLQLRHADFGGASLVISGNVPQGAGLSSSASLEVAVGQALQSLYQLPLSGVELALNGQEAENQFVGCNCGIMDQLISALGQQDHALLIDCRTLETRAVPMPENVAVVIINSNVKRGLVDSEYNTRRQQCETAARFFGVKALRDVDPNLFFSIQDELDPVVAKRARHVITENERTLTAADALAAGDLKLMGQLMHESHISMRDDFEITVPPIDSLVDIVKSVIGEQGGVRMTGGGFGGCIVALMPNSLVEQVRAAVAQQYPAYSGGRTETFYVCQASQGAGLC</sequence>